<name>NIKE_ECOL6</name>
<proteinExistence type="inferred from homology"/>
<dbReference type="EC" id="7.2.2.11" evidence="1"/>
<dbReference type="EMBL" id="AE014075">
    <property type="protein sequence ID" value="AAN82709.1"/>
    <property type="molecule type" value="Genomic_DNA"/>
</dbReference>
<dbReference type="RefSeq" id="WP_000173679.1">
    <property type="nucleotide sequence ID" value="NZ_CP051263.1"/>
</dbReference>
<dbReference type="SMR" id="Q8FCM9"/>
<dbReference type="STRING" id="199310.c4273"/>
<dbReference type="KEGG" id="ecc:c4273"/>
<dbReference type="eggNOG" id="COG1124">
    <property type="taxonomic scope" value="Bacteria"/>
</dbReference>
<dbReference type="HOGENOM" id="CLU_000604_1_23_6"/>
<dbReference type="BioCyc" id="ECOL199310:C4273-MONOMER"/>
<dbReference type="Proteomes" id="UP000001410">
    <property type="component" value="Chromosome"/>
</dbReference>
<dbReference type="GO" id="GO:0005886">
    <property type="term" value="C:plasma membrane"/>
    <property type="evidence" value="ECO:0007669"/>
    <property type="project" value="UniProtKB-SubCell"/>
</dbReference>
<dbReference type="GO" id="GO:0015413">
    <property type="term" value="F:ABC-type nickel transporter activity"/>
    <property type="evidence" value="ECO:0007669"/>
    <property type="project" value="UniProtKB-EC"/>
</dbReference>
<dbReference type="GO" id="GO:0005524">
    <property type="term" value="F:ATP binding"/>
    <property type="evidence" value="ECO:0007669"/>
    <property type="project" value="UniProtKB-KW"/>
</dbReference>
<dbReference type="GO" id="GO:0016887">
    <property type="term" value="F:ATP hydrolysis activity"/>
    <property type="evidence" value="ECO:0007669"/>
    <property type="project" value="InterPro"/>
</dbReference>
<dbReference type="GO" id="GO:0016151">
    <property type="term" value="F:nickel cation binding"/>
    <property type="evidence" value="ECO:0007669"/>
    <property type="project" value="InterPro"/>
</dbReference>
<dbReference type="CDD" id="cd03257">
    <property type="entry name" value="ABC_NikE_OppD_transporters"/>
    <property type="match status" value="1"/>
</dbReference>
<dbReference type="FunFam" id="3.40.50.300:FF:001020">
    <property type="entry name" value="Nickel import ATP-binding protein NikE"/>
    <property type="match status" value="1"/>
</dbReference>
<dbReference type="Gene3D" id="3.40.50.300">
    <property type="entry name" value="P-loop containing nucleotide triphosphate hydrolases"/>
    <property type="match status" value="1"/>
</dbReference>
<dbReference type="InterPro" id="IPR003593">
    <property type="entry name" value="AAA+_ATPase"/>
</dbReference>
<dbReference type="InterPro" id="IPR050319">
    <property type="entry name" value="ABC_transp_ATP-bind"/>
</dbReference>
<dbReference type="InterPro" id="IPR003439">
    <property type="entry name" value="ABC_transporter-like_ATP-bd"/>
</dbReference>
<dbReference type="InterPro" id="IPR017871">
    <property type="entry name" value="ABC_transporter-like_CS"/>
</dbReference>
<dbReference type="InterPro" id="IPR014137">
    <property type="entry name" value="Nickel_NikE"/>
</dbReference>
<dbReference type="InterPro" id="IPR027417">
    <property type="entry name" value="P-loop_NTPase"/>
</dbReference>
<dbReference type="NCBIfam" id="TIGR02769">
    <property type="entry name" value="nickel_nikE"/>
    <property type="match status" value="1"/>
</dbReference>
<dbReference type="NCBIfam" id="NF007739">
    <property type="entry name" value="PRK10419.1"/>
    <property type="match status" value="1"/>
</dbReference>
<dbReference type="PANTHER" id="PTHR43776:SF7">
    <property type="entry name" value="D,D-DIPEPTIDE TRANSPORT ATP-BINDING PROTEIN DDPF-RELATED"/>
    <property type="match status" value="1"/>
</dbReference>
<dbReference type="PANTHER" id="PTHR43776">
    <property type="entry name" value="TRANSPORT ATP-BINDING PROTEIN"/>
    <property type="match status" value="1"/>
</dbReference>
<dbReference type="Pfam" id="PF00005">
    <property type="entry name" value="ABC_tran"/>
    <property type="match status" value="1"/>
</dbReference>
<dbReference type="SMART" id="SM00382">
    <property type="entry name" value="AAA"/>
    <property type="match status" value="1"/>
</dbReference>
<dbReference type="SUPFAM" id="SSF52540">
    <property type="entry name" value="P-loop containing nucleoside triphosphate hydrolases"/>
    <property type="match status" value="1"/>
</dbReference>
<dbReference type="PROSITE" id="PS00211">
    <property type="entry name" value="ABC_TRANSPORTER_1"/>
    <property type="match status" value="1"/>
</dbReference>
<dbReference type="PROSITE" id="PS50893">
    <property type="entry name" value="ABC_TRANSPORTER_2"/>
    <property type="match status" value="1"/>
</dbReference>
<dbReference type="PROSITE" id="PS51248">
    <property type="entry name" value="NIKE"/>
    <property type="match status" value="1"/>
</dbReference>
<protein>
    <recommendedName>
        <fullName evidence="1">Nickel import ATP-binding protein NikE</fullName>
        <ecNumber evidence="1">7.2.2.11</ecNumber>
    </recommendedName>
</protein>
<organism>
    <name type="scientific">Escherichia coli O6:H1 (strain CFT073 / ATCC 700928 / UPEC)</name>
    <dbReference type="NCBI Taxonomy" id="199310"/>
    <lineage>
        <taxon>Bacteria</taxon>
        <taxon>Pseudomonadati</taxon>
        <taxon>Pseudomonadota</taxon>
        <taxon>Gammaproteobacteria</taxon>
        <taxon>Enterobacterales</taxon>
        <taxon>Enterobacteriaceae</taxon>
        <taxon>Escherichia</taxon>
    </lineage>
</organism>
<gene>
    <name evidence="1" type="primary">nikE</name>
    <name type="ordered locus">c4273</name>
</gene>
<evidence type="ECO:0000255" key="1">
    <source>
        <dbReference type="HAMAP-Rule" id="MF_01712"/>
    </source>
</evidence>
<feature type="chain" id="PRO_0000092628" description="Nickel import ATP-binding protein NikE">
    <location>
        <begin position="1"/>
        <end position="268"/>
    </location>
</feature>
<feature type="domain" description="ABC transporter" evidence="1">
    <location>
        <begin position="4"/>
        <end position="252"/>
    </location>
</feature>
<feature type="binding site" evidence="1">
    <location>
        <begin position="45"/>
        <end position="52"/>
    </location>
    <ligand>
        <name>ATP</name>
        <dbReference type="ChEBI" id="CHEBI:30616"/>
    </ligand>
</feature>
<sequence length="268" mass="29695">MTLLNVSDLSHHYAHGGFSGKHQHQAVLNNVSLALKSGETVALLGRSGCGKSTLARLLVGLESPSQGNISWRGEPLAKLNRAQRKAFRRDIQMVFQDSISAVNPRKTVREILREPMRHLLSLKKAEQLARASEMLKAVDLDDSVLDKRPPQLSGGQLQRVCLARALAVEPKLLILDEAVSNLDLVLQAGVIRLLKKLQQQFGTACLFITHDLRLVERFCQRVMVMDNGQIVETQVVGDKLTFSSDAGRVLQNAVLPAFPVRRRTTEKV</sequence>
<reference key="1">
    <citation type="journal article" date="2002" name="Proc. Natl. Acad. Sci. U.S.A.">
        <title>Extensive mosaic structure revealed by the complete genome sequence of uropathogenic Escherichia coli.</title>
        <authorList>
            <person name="Welch R.A."/>
            <person name="Burland V."/>
            <person name="Plunkett G. III"/>
            <person name="Redford P."/>
            <person name="Roesch P."/>
            <person name="Rasko D."/>
            <person name="Buckles E.L."/>
            <person name="Liou S.-R."/>
            <person name="Boutin A."/>
            <person name="Hackett J."/>
            <person name="Stroud D."/>
            <person name="Mayhew G.F."/>
            <person name="Rose D.J."/>
            <person name="Zhou S."/>
            <person name="Schwartz D.C."/>
            <person name="Perna N.T."/>
            <person name="Mobley H.L.T."/>
            <person name="Donnenberg M.S."/>
            <person name="Blattner F.R."/>
        </authorList>
    </citation>
    <scope>NUCLEOTIDE SEQUENCE [LARGE SCALE GENOMIC DNA]</scope>
    <source>
        <strain>CFT073 / ATCC 700928 / UPEC</strain>
    </source>
</reference>
<keyword id="KW-0067">ATP-binding</keyword>
<keyword id="KW-0997">Cell inner membrane</keyword>
<keyword id="KW-1003">Cell membrane</keyword>
<keyword id="KW-0406">Ion transport</keyword>
<keyword id="KW-0472">Membrane</keyword>
<keyword id="KW-0533">Nickel</keyword>
<keyword id="KW-0921">Nickel transport</keyword>
<keyword id="KW-0547">Nucleotide-binding</keyword>
<keyword id="KW-1185">Reference proteome</keyword>
<keyword id="KW-1278">Translocase</keyword>
<keyword id="KW-0813">Transport</keyword>
<comment type="function">
    <text evidence="1">Part of the ABC transporter complex NikABCDE involved in nickel import. Responsible for energy coupling to the transport system.</text>
</comment>
<comment type="catalytic activity">
    <reaction evidence="1">
        <text>Ni(2+)(out) + ATP + H2O = Ni(2+)(in) + ADP + phosphate + H(+)</text>
        <dbReference type="Rhea" id="RHEA:15557"/>
        <dbReference type="ChEBI" id="CHEBI:15377"/>
        <dbReference type="ChEBI" id="CHEBI:15378"/>
        <dbReference type="ChEBI" id="CHEBI:30616"/>
        <dbReference type="ChEBI" id="CHEBI:43474"/>
        <dbReference type="ChEBI" id="CHEBI:49786"/>
        <dbReference type="ChEBI" id="CHEBI:456216"/>
        <dbReference type="EC" id="7.2.2.11"/>
    </reaction>
</comment>
<comment type="subunit">
    <text evidence="1">The complex is composed of two ATP-binding proteins (NikD and NikE), two transmembrane proteins (NikB and NikC) and a solute-binding protein (NikA).</text>
</comment>
<comment type="subcellular location">
    <subcellularLocation>
        <location evidence="1">Cell inner membrane</location>
        <topology evidence="1">Peripheral membrane protein</topology>
    </subcellularLocation>
</comment>
<comment type="similarity">
    <text evidence="1">Belongs to the ABC transporter superfamily. Nickel importer (TC 3.A.1.5.3) family.</text>
</comment>
<accession>Q8FCM9</accession>